<accession>P85968</accession>
<dbReference type="EC" id="1.1.1.44"/>
<dbReference type="EMBL" id="AABR03040409">
    <property type="status" value="NOT_ANNOTATED_CDS"/>
    <property type="molecule type" value="Genomic_DNA"/>
</dbReference>
<dbReference type="RefSeq" id="NP_001292364.1">
    <property type="nucleotide sequence ID" value="NM_001305435.1"/>
</dbReference>
<dbReference type="SMR" id="P85968"/>
<dbReference type="FunCoup" id="P85968">
    <property type="interactions" value="2049"/>
</dbReference>
<dbReference type="IntAct" id="P85968">
    <property type="interactions" value="2"/>
</dbReference>
<dbReference type="BindingDB" id="P85968"/>
<dbReference type="ChEMBL" id="CHEMBL5169141"/>
<dbReference type="iPTMnet" id="P85968"/>
<dbReference type="PhosphoSitePlus" id="P85968"/>
<dbReference type="jPOST" id="P85968"/>
<dbReference type="Ensembl" id="ENSRNOT00000104782.1">
    <property type="protein sequence ID" value="ENSRNOP00000082532.1"/>
    <property type="gene ID" value="ENSRNOG00000057626.2"/>
</dbReference>
<dbReference type="GeneID" id="100360180"/>
<dbReference type="KEGG" id="rno:100360180"/>
<dbReference type="AGR" id="RGD:1583832"/>
<dbReference type="CTD" id="5226"/>
<dbReference type="RGD" id="1583832">
    <property type="gene designation" value="Pgd"/>
</dbReference>
<dbReference type="GeneTree" id="ENSGT00940000157445"/>
<dbReference type="InParanoid" id="P85968"/>
<dbReference type="OrthoDB" id="20051at9989"/>
<dbReference type="BRENDA" id="1.1.1.44">
    <property type="organism ID" value="5301"/>
</dbReference>
<dbReference type="Reactome" id="R-RNO-71336">
    <property type="pathway name" value="Pentose phosphate pathway"/>
</dbReference>
<dbReference type="SABIO-RK" id="P85968"/>
<dbReference type="UniPathway" id="UPA00115">
    <property type="reaction ID" value="UER00410"/>
</dbReference>
<dbReference type="PRO" id="PR:P85968"/>
<dbReference type="Proteomes" id="UP000002494">
    <property type="component" value="Chromosome 5"/>
</dbReference>
<dbReference type="GO" id="GO:0005829">
    <property type="term" value="C:cytosol"/>
    <property type="evidence" value="ECO:0000266"/>
    <property type="project" value="RGD"/>
</dbReference>
<dbReference type="GO" id="GO:0030246">
    <property type="term" value="F:carbohydrate binding"/>
    <property type="evidence" value="ECO:0000314"/>
    <property type="project" value="RGD"/>
</dbReference>
<dbReference type="GO" id="GO:0031406">
    <property type="term" value="F:carboxylic acid binding"/>
    <property type="evidence" value="ECO:0000314"/>
    <property type="project" value="RGD"/>
</dbReference>
<dbReference type="GO" id="GO:0050661">
    <property type="term" value="F:NADP binding"/>
    <property type="evidence" value="ECO:0000314"/>
    <property type="project" value="RGD"/>
</dbReference>
<dbReference type="GO" id="GO:0004616">
    <property type="term" value="F:phosphogluconate dehydrogenase (decarboxylating) activity"/>
    <property type="evidence" value="ECO:0000314"/>
    <property type="project" value="CACAO"/>
</dbReference>
<dbReference type="GO" id="GO:0019521">
    <property type="term" value="P:D-gluconate metabolic process"/>
    <property type="evidence" value="ECO:0000314"/>
    <property type="project" value="RGD"/>
</dbReference>
<dbReference type="GO" id="GO:0006739">
    <property type="term" value="P:NADP metabolic process"/>
    <property type="evidence" value="ECO:0000314"/>
    <property type="project" value="RGD"/>
</dbReference>
<dbReference type="GO" id="GO:0019322">
    <property type="term" value="P:pentose biosynthetic process"/>
    <property type="evidence" value="ECO:0000266"/>
    <property type="project" value="RGD"/>
</dbReference>
<dbReference type="GO" id="GO:0006098">
    <property type="term" value="P:pentose-phosphate shunt"/>
    <property type="evidence" value="ECO:0000314"/>
    <property type="project" value="RGD"/>
</dbReference>
<dbReference type="GO" id="GO:0009051">
    <property type="term" value="P:pentose-phosphate shunt, oxidative branch"/>
    <property type="evidence" value="ECO:0000315"/>
    <property type="project" value="RGD"/>
</dbReference>
<dbReference type="FunFam" id="1.10.1040.10:FF:000002">
    <property type="entry name" value="6-phosphogluconate dehydrogenase, decarboxylating"/>
    <property type="match status" value="1"/>
</dbReference>
<dbReference type="FunFam" id="1.20.5.320:FF:000002">
    <property type="entry name" value="6-phosphogluconate dehydrogenase, decarboxylating"/>
    <property type="match status" value="1"/>
</dbReference>
<dbReference type="FunFam" id="3.40.50.720:FF:000007">
    <property type="entry name" value="6-phosphogluconate dehydrogenase, decarboxylating"/>
    <property type="match status" value="1"/>
</dbReference>
<dbReference type="Gene3D" id="1.20.5.320">
    <property type="entry name" value="6-Phosphogluconate Dehydrogenase, domain 3"/>
    <property type="match status" value="1"/>
</dbReference>
<dbReference type="Gene3D" id="1.10.1040.10">
    <property type="entry name" value="N-(1-d-carboxylethyl)-l-norvaline Dehydrogenase, domain 2"/>
    <property type="match status" value="1"/>
</dbReference>
<dbReference type="Gene3D" id="3.40.50.720">
    <property type="entry name" value="NAD(P)-binding Rossmann-like Domain"/>
    <property type="match status" value="1"/>
</dbReference>
<dbReference type="InterPro" id="IPR008927">
    <property type="entry name" value="6-PGluconate_DH-like_C_sf"/>
</dbReference>
<dbReference type="InterPro" id="IPR013328">
    <property type="entry name" value="6PGD_dom2"/>
</dbReference>
<dbReference type="InterPro" id="IPR006114">
    <property type="entry name" value="6PGDH_C"/>
</dbReference>
<dbReference type="InterPro" id="IPR006113">
    <property type="entry name" value="6PGDH_Gnd/GntZ"/>
</dbReference>
<dbReference type="InterPro" id="IPR006115">
    <property type="entry name" value="6PGDH_NADP-bd"/>
</dbReference>
<dbReference type="InterPro" id="IPR006184">
    <property type="entry name" value="6PGdom_BS"/>
</dbReference>
<dbReference type="InterPro" id="IPR036291">
    <property type="entry name" value="NAD(P)-bd_dom_sf"/>
</dbReference>
<dbReference type="InterPro" id="IPR006183">
    <property type="entry name" value="Pgluconate_DH"/>
</dbReference>
<dbReference type="NCBIfam" id="TIGR00873">
    <property type="entry name" value="gnd"/>
    <property type="match status" value="1"/>
</dbReference>
<dbReference type="NCBIfam" id="NF006765">
    <property type="entry name" value="PRK09287.1"/>
    <property type="match status" value="1"/>
</dbReference>
<dbReference type="PANTHER" id="PTHR11811">
    <property type="entry name" value="6-PHOSPHOGLUCONATE DEHYDROGENASE"/>
    <property type="match status" value="1"/>
</dbReference>
<dbReference type="Pfam" id="PF00393">
    <property type="entry name" value="6PGD"/>
    <property type="match status" value="1"/>
</dbReference>
<dbReference type="Pfam" id="PF03446">
    <property type="entry name" value="NAD_binding_2"/>
    <property type="match status" value="1"/>
</dbReference>
<dbReference type="PIRSF" id="PIRSF000109">
    <property type="entry name" value="6PGD"/>
    <property type="match status" value="1"/>
</dbReference>
<dbReference type="PRINTS" id="PR00076">
    <property type="entry name" value="6PGDHDRGNASE"/>
</dbReference>
<dbReference type="SMART" id="SM01350">
    <property type="entry name" value="6PGD"/>
    <property type="match status" value="1"/>
</dbReference>
<dbReference type="SUPFAM" id="SSF48179">
    <property type="entry name" value="6-phosphogluconate dehydrogenase C-terminal domain-like"/>
    <property type="match status" value="1"/>
</dbReference>
<dbReference type="SUPFAM" id="SSF51735">
    <property type="entry name" value="NAD(P)-binding Rossmann-fold domains"/>
    <property type="match status" value="1"/>
</dbReference>
<dbReference type="PROSITE" id="PS00461">
    <property type="entry name" value="6PGD"/>
    <property type="match status" value="1"/>
</dbReference>
<protein>
    <recommendedName>
        <fullName evidence="2">6-phosphogluconate dehydrogenase, decarboxylating</fullName>
        <ecNumber>1.1.1.44</ecNumber>
    </recommendedName>
</protein>
<evidence type="ECO:0000250" key="1"/>
<evidence type="ECO:0000250" key="2">
    <source>
        <dbReference type="UniProtKB" id="P00349"/>
    </source>
</evidence>
<evidence type="ECO:0000250" key="3">
    <source>
        <dbReference type="UniProtKB" id="P52209"/>
    </source>
</evidence>
<evidence type="ECO:0000250" key="4">
    <source>
        <dbReference type="UniProtKB" id="Q9DCD0"/>
    </source>
</evidence>
<evidence type="ECO:0000255" key="5"/>
<evidence type="ECO:0000269" key="6">
    <source>
    </source>
</evidence>
<proteinExistence type="evidence at protein level"/>
<comment type="function">
    <text evidence="1">Catalyzes the oxidative decarboxylation of 6-phosphogluconate to ribulose 5-phosphate and CO(2), with concomitant reduction of NADP to NADPH.</text>
</comment>
<comment type="catalytic activity">
    <reaction evidence="2">
        <text>6-phospho-D-gluconate + NADP(+) = D-ribulose 5-phosphate + CO2 + NADPH</text>
        <dbReference type="Rhea" id="RHEA:10116"/>
        <dbReference type="ChEBI" id="CHEBI:16526"/>
        <dbReference type="ChEBI" id="CHEBI:57783"/>
        <dbReference type="ChEBI" id="CHEBI:58121"/>
        <dbReference type="ChEBI" id="CHEBI:58349"/>
        <dbReference type="ChEBI" id="CHEBI:58759"/>
        <dbReference type="EC" id="1.1.1.44"/>
    </reaction>
</comment>
<comment type="pathway">
    <text evidence="2">Carbohydrate degradation; pentose phosphate pathway; D-ribulose 5-phosphate from D-glucose 6-phosphate (oxidative stage): step 3/3.</text>
</comment>
<comment type="subunit">
    <text evidence="2">Homodimer.</text>
</comment>
<comment type="subcellular location">
    <subcellularLocation>
        <location evidence="6">Cytoplasm</location>
    </subcellularLocation>
</comment>
<comment type="similarity">
    <text evidence="5">Belongs to the 6-phosphogluconate dehydrogenase family.</text>
</comment>
<name>6PGD_RAT</name>
<gene>
    <name evidence="2" type="primary">Pgd</name>
</gene>
<keyword id="KW-0007">Acetylation</keyword>
<keyword id="KW-0963">Cytoplasm</keyword>
<keyword id="KW-0311">Gluconate utilization</keyword>
<keyword id="KW-0521">NADP</keyword>
<keyword id="KW-0560">Oxidoreductase</keyword>
<keyword id="KW-0570">Pentose shunt</keyword>
<keyword id="KW-0597">Phosphoprotein</keyword>
<keyword id="KW-1185">Reference proteome</keyword>
<organism>
    <name type="scientific">Rattus norvegicus</name>
    <name type="common">Rat</name>
    <dbReference type="NCBI Taxonomy" id="10116"/>
    <lineage>
        <taxon>Eukaryota</taxon>
        <taxon>Metazoa</taxon>
        <taxon>Chordata</taxon>
        <taxon>Craniata</taxon>
        <taxon>Vertebrata</taxon>
        <taxon>Euteleostomi</taxon>
        <taxon>Mammalia</taxon>
        <taxon>Eutheria</taxon>
        <taxon>Euarchontoglires</taxon>
        <taxon>Glires</taxon>
        <taxon>Rodentia</taxon>
        <taxon>Myomorpha</taxon>
        <taxon>Muroidea</taxon>
        <taxon>Muridae</taxon>
        <taxon>Murinae</taxon>
        <taxon>Rattus</taxon>
    </lineage>
</organism>
<sequence length="483" mass="53236">MAQADIALIGLAVMGQNLILNMNDHGFVVCAFNRTVSKVDDFLAKEAKGTKVIGAKSLKDMVSKLKKPRRVILLVKAGQAVDDFIEKLVPLLDTGDIIIDGGNSEYRDTTRRCQDLKAKGILFVGSGVSGGEEGARYGPSLMPGGNKEAWPHIKTIFQAIAAKVGTGEPCCDWVGDEGAGHFVKMVHNGIEYGDMQLICEAYHLMKDVLGMRHEEMAQAFEDWNKTELDSFLIEITANILKFQDTDGKELLPKIRDSAGQKGTGKWTAISALEYGMPVTLIGEAVFARCLSSLKEERVQASRKLKGPKMVQLEGSKQAFLEDVRKALYASKIISYAQGFMLLRQAATEFGWTLNYGGIALMWRGGCIIRSVFLGKIKDAFERNPELQNLLLDDFFKSAVDDCQDSWRRVISTGVQAGIPMPCFTTALSFYDGYRHEMLPANLIQAQRDYFGAHTYELLSKPGEFIHTNWTGHGGSVSSSSYNA</sequence>
<feature type="chain" id="PRO_0000349115" description="6-phosphogluconate dehydrogenase, decarboxylating">
    <location>
        <begin position="1"/>
        <end position="483"/>
    </location>
</feature>
<feature type="active site" description="Proton acceptor" evidence="1">
    <location>
        <position position="184"/>
    </location>
</feature>
<feature type="active site" description="Proton donor" evidence="1">
    <location>
        <position position="191"/>
    </location>
</feature>
<feature type="binding site" description="in other chain" evidence="1">
    <location>
        <begin position="10"/>
        <end position="15"/>
    </location>
    <ligand>
        <name>NADP(+)</name>
        <dbReference type="ChEBI" id="CHEBI:58349"/>
        <note>ligand shared between dimeric partners</note>
    </ligand>
</feature>
<feature type="binding site" description="in other chain" evidence="1">
    <location>
        <begin position="33"/>
        <end position="35"/>
    </location>
    <ligand>
        <name>NADP(+)</name>
        <dbReference type="ChEBI" id="CHEBI:58349"/>
        <note>ligand shared between dimeric partners</note>
    </ligand>
</feature>
<feature type="binding site" description="in other chain" evidence="1">
    <location>
        <begin position="75"/>
        <end position="77"/>
    </location>
    <ligand>
        <name>NADP(+)</name>
        <dbReference type="ChEBI" id="CHEBI:58349"/>
        <note>ligand shared between dimeric partners</note>
    </ligand>
</feature>
<feature type="binding site" description="in other chain" evidence="1">
    <location>
        <position position="103"/>
    </location>
    <ligand>
        <name>NADP(+)</name>
        <dbReference type="ChEBI" id="CHEBI:58349"/>
        <note>ligand shared between dimeric partners</note>
    </ligand>
</feature>
<feature type="binding site" description="in other chain" evidence="1">
    <location>
        <position position="103"/>
    </location>
    <ligand>
        <name>substrate</name>
        <note>ligand shared between dimeric partners</note>
    </ligand>
</feature>
<feature type="binding site" description="in other chain" evidence="1">
    <location>
        <begin position="129"/>
        <end position="131"/>
    </location>
    <ligand>
        <name>substrate</name>
        <note>ligand shared between dimeric partners</note>
    </ligand>
</feature>
<feature type="binding site" description="in other chain" evidence="1">
    <location>
        <begin position="187"/>
        <end position="188"/>
    </location>
    <ligand>
        <name>substrate</name>
        <note>ligand shared between dimeric partners</note>
    </ligand>
</feature>
<feature type="binding site" description="in other chain" evidence="1">
    <location>
        <position position="192"/>
    </location>
    <ligand>
        <name>substrate</name>
        <note>ligand shared between dimeric partners</note>
    </ligand>
</feature>
<feature type="binding site" description="in other chain" evidence="1">
    <location>
        <position position="261"/>
    </location>
    <ligand>
        <name>substrate</name>
        <note>ligand shared between dimeric partners</note>
    </ligand>
</feature>
<feature type="binding site" description="in other chain" evidence="1">
    <location>
        <position position="288"/>
    </location>
    <ligand>
        <name>substrate</name>
        <note>ligand shared between dimeric partners</note>
    </ligand>
</feature>
<feature type="binding site" evidence="1">
    <location>
        <position position="447"/>
    </location>
    <ligand>
        <name>substrate</name>
        <note>ligand shared between dimeric partners</note>
    </ligand>
</feature>
<feature type="binding site" evidence="1">
    <location>
        <position position="453"/>
    </location>
    <ligand>
        <name>substrate</name>
        <note>ligand shared between dimeric partners</note>
    </ligand>
</feature>
<feature type="binding site" evidence="1">
    <location>
        <begin position="478"/>
        <end position="481"/>
    </location>
    <ligand>
        <name>NADP(+)</name>
        <dbReference type="ChEBI" id="CHEBI:58349"/>
        <note>ligand shared between dimeric partners</note>
    </ligand>
</feature>
<feature type="modified residue" description="N6-acetyllysine" evidence="4">
    <location>
        <position position="38"/>
    </location>
</feature>
<feature type="modified residue" description="Phosphoserine" evidence="4">
    <location>
        <position position="57"/>
    </location>
</feature>
<feature type="modified residue" description="N6-acetyllysine" evidence="3">
    <location>
        <position position="59"/>
    </location>
</feature>
<feature type="modified residue" description="Phosphoserine" evidence="4">
    <location>
        <position position="129"/>
    </location>
</feature>
<reference key="1">
    <citation type="journal article" date="2004" name="Nature">
        <title>Genome sequence of the Brown Norway rat yields insights into mammalian evolution.</title>
        <authorList>
            <person name="Gibbs R.A."/>
            <person name="Weinstock G.M."/>
            <person name="Metzker M.L."/>
            <person name="Muzny D.M."/>
            <person name="Sodergren E.J."/>
            <person name="Scherer S."/>
            <person name="Scott G."/>
            <person name="Steffen D."/>
            <person name="Worley K.C."/>
            <person name="Burch P.E."/>
            <person name="Okwuonu G."/>
            <person name="Hines S."/>
            <person name="Lewis L."/>
            <person name="Deramo C."/>
            <person name="Delgado O."/>
            <person name="Dugan-Rocha S."/>
            <person name="Miner G."/>
            <person name="Morgan M."/>
            <person name="Hawes A."/>
            <person name="Gill R."/>
            <person name="Holt R.A."/>
            <person name="Adams M.D."/>
            <person name="Amanatides P.G."/>
            <person name="Baden-Tillson H."/>
            <person name="Barnstead M."/>
            <person name="Chin S."/>
            <person name="Evans C.A."/>
            <person name="Ferriera S."/>
            <person name="Fosler C."/>
            <person name="Glodek A."/>
            <person name="Gu Z."/>
            <person name="Jennings D."/>
            <person name="Kraft C.L."/>
            <person name="Nguyen T."/>
            <person name="Pfannkoch C.M."/>
            <person name="Sitter C."/>
            <person name="Sutton G.G."/>
            <person name="Venter J.C."/>
            <person name="Woodage T."/>
            <person name="Smith D."/>
            <person name="Lee H.-M."/>
            <person name="Gustafson E."/>
            <person name="Cahill P."/>
            <person name="Kana A."/>
            <person name="Doucette-Stamm L."/>
            <person name="Weinstock K."/>
            <person name="Fechtel K."/>
            <person name="Weiss R.B."/>
            <person name="Dunn D.M."/>
            <person name="Green E.D."/>
            <person name="Blakesley R.W."/>
            <person name="Bouffard G.G."/>
            <person name="De Jong P.J."/>
            <person name="Osoegawa K."/>
            <person name="Zhu B."/>
            <person name="Marra M."/>
            <person name="Schein J."/>
            <person name="Bosdet I."/>
            <person name="Fjell C."/>
            <person name="Jones S."/>
            <person name="Krzywinski M."/>
            <person name="Mathewson C."/>
            <person name="Siddiqui A."/>
            <person name="Wye N."/>
            <person name="McPherson J."/>
            <person name="Zhao S."/>
            <person name="Fraser C.M."/>
            <person name="Shetty J."/>
            <person name="Shatsman S."/>
            <person name="Geer K."/>
            <person name="Chen Y."/>
            <person name="Abramzon S."/>
            <person name="Nierman W.C."/>
            <person name="Havlak P.H."/>
            <person name="Chen R."/>
            <person name="Durbin K.J."/>
            <person name="Egan A."/>
            <person name="Ren Y."/>
            <person name="Song X.-Z."/>
            <person name="Li B."/>
            <person name="Liu Y."/>
            <person name="Qin X."/>
            <person name="Cawley S."/>
            <person name="Cooney A.J."/>
            <person name="D'Souza L.M."/>
            <person name="Martin K."/>
            <person name="Wu J.Q."/>
            <person name="Gonzalez-Garay M.L."/>
            <person name="Jackson A.R."/>
            <person name="Kalafus K.J."/>
            <person name="McLeod M.P."/>
            <person name="Milosavljevic A."/>
            <person name="Virk D."/>
            <person name="Volkov A."/>
            <person name="Wheeler D.A."/>
            <person name="Zhang Z."/>
            <person name="Bailey J.A."/>
            <person name="Eichler E.E."/>
            <person name="Tuzun E."/>
            <person name="Birney E."/>
            <person name="Mongin E."/>
            <person name="Ureta-Vidal A."/>
            <person name="Woodwark C."/>
            <person name="Zdobnov E."/>
            <person name="Bork P."/>
            <person name="Suyama M."/>
            <person name="Torrents D."/>
            <person name="Alexandersson M."/>
            <person name="Trask B.J."/>
            <person name="Young J.M."/>
            <person name="Huang H."/>
            <person name="Wang H."/>
            <person name="Xing H."/>
            <person name="Daniels S."/>
            <person name="Gietzen D."/>
            <person name="Schmidt J."/>
            <person name="Stevens K."/>
            <person name="Vitt U."/>
            <person name="Wingrove J."/>
            <person name="Camara F."/>
            <person name="Mar Alba M."/>
            <person name="Abril J.F."/>
            <person name="Guigo R."/>
            <person name="Smit A."/>
            <person name="Dubchak I."/>
            <person name="Rubin E.M."/>
            <person name="Couronne O."/>
            <person name="Poliakov A."/>
            <person name="Huebner N."/>
            <person name="Ganten D."/>
            <person name="Goesele C."/>
            <person name="Hummel O."/>
            <person name="Kreitler T."/>
            <person name="Lee Y.-A."/>
            <person name="Monti J."/>
            <person name="Schulz H."/>
            <person name="Zimdahl H."/>
            <person name="Himmelbauer H."/>
            <person name="Lehrach H."/>
            <person name="Jacob H.J."/>
            <person name="Bromberg S."/>
            <person name="Gullings-Handley J."/>
            <person name="Jensen-Seaman M.I."/>
            <person name="Kwitek A.E."/>
            <person name="Lazar J."/>
            <person name="Pasko D."/>
            <person name="Tonellato P.J."/>
            <person name="Twigger S."/>
            <person name="Ponting C.P."/>
            <person name="Duarte J.M."/>
            <person name="Rice S."/>
            <person name="Goodstadt L."/>
            <person name="Beatson S.A."/>
            <person name="Emes R.D."/>
            <person name="Winter E.E."/>
            <person name="Webber C."/>
            <person name="Brandt P."/>
            <person name="Nyakatura G."/>
            <person name="Adetobi M."/>
            <person name="Chiaromonte F."/>
            <person name="Elnitski L."/>
            <person name="Eswara P."/>
            <person name="Hardison R.C."/>
            <person name="Hou M."/>
            <person name="Kolbe D."/>
            <person name="Makova K."/>
            <person name="Miller W."/>
            <person name="Nekrutenko A."/>
            <person name="Riemer C."/>
            <person name="Schwartz S."/>
            <person name="Taylor J."/>
            <person name="Yang S."/>
            <person name="Zhang Y."/>
            <person name="Lindpaintner K."/>
            <person name="Andrews T.D."/>
            <person name="Caccamo M."/>
            <person name="Clamp M."/>
            <person name="Clarke L."/>
            <person name="Curwen V."/>
            <person name="Durbin R.M."/>
            <person name="Eyras E."/>
            <person name="Searle S.M."/>
            <person name="Cooper G.M."/>
            <person name="Batzoglou S."/>
            <person name="Brudno M."/>
            <person name="Sidow A."/>
            <person name="Stone E.A."/>
            <person name="Payseur B.A."/>
            <person name="Bourque G."/>
            <person name="Lopez-Otin C."/>
            <person name="Puente X.S."/>
            <person name="Chakrabarti K."/>
            <person name="Chatterji S."/>
            <person name="Dewey C."/>
            <person name="Pachter L."/>
            <person name="Bray N."/>
            <person name="Yap V.B."/>
            <person name="Caspi A."/>
            <person name="Tesler G."/>
            <person name="Pevzner P.A."/>
            <person name="Haussler D."/>
            <person name="Roskin K.M."/>
            <person name="Baertsch R."/>
            <person name="Clawson H."/>
            <person name="Furey T.S."/>
            <person name="Hinrichs A.S."/>
            <person name="Karolchik D."/>
            <person name="Kent W.J."/>
            <person name="Rosenbloom K.R."/>
            <person name="Trumbower H."/>
            <person name="Weirauch M."/>
            <person name="Cooper D.N."/>
            <person name="Stenson P.D."/>
            <person name="Ma B."/>
            <person name="Brent M."/>
            <person name="Arumugam M."/>
            <person name="Shteynberg D."/>
            <person name="Copley R.R."/>
            <person name="Taylor M.S."/>
            <person name="Riethman H."/>
            <person name="Mudunuri U."/>
            <person name="Peterson J."/>
            <person name="Guyer M."/>
            <person name="Felsenfeld A."/>
            <person name="Old S."/>
            <person name="Mockrin S."/>
            <person name="Collins F.S."/>
        </authorList>
    </citation>
    <scope>NUCLEOTIDE SEQUENCE [LARGE SCALE GENOMIC DNA]</scope>
    <source>
        <strain>Brown Norway</strain>
    </source>
</reference>
<reference key="2">
    <citation type="journal article" date="2009" name="Proteomics">
        <title>Proteome profile of the mature rat olfactory bulb.</title>
        <authorList>
            <person name="Maurya D.K."/>
            <person name="Sundaram C.S."/>
            <person name="Bhargava P."/>
        </authorList>
    </citation>
    <scope>IDENTIFICATION BY MASS SPECTROMETRY</scope>
    <scope>SUBCELLULAR LOCATION</scope>
</reference>